<feature type="chain" id="PRO_1000127071" description="Small ribosomal subunit protein uS10">
    <location>
        <begin position="1"/>
        <end position="103"/>
    </location>
</feature>
<name>RS10_ACTPJ</name>
<gene>
    <name evidence="1" type="primary">rpsJ</name>
    <name type="ordered locus">APJL_1794</name>
</gene>
<reference key="1">
    <citation type="journal article" date="2008" name="PLoS ONE">
        <title>Genome biology of Actinobacillus pleuropneumoniae JL03, an isolate of serotype 3 prevalent in China.</title>
        <authorList>
            <person name="Xu Z."/>
            <person name="Zhou Y."/>
            <person name="Li L."/>
            <person name="Zhou R."/>
            <person name="Xiao S."/>
            <person name="Wan Y."/>
            <person name="Zhang S."/>
            <person name="Wang K."/>
            <person name="Li W."/>
            <person name="Li L."/>
            <person name="Jin H."/>
            <person name="Kang M."/>
            <person name="Dalai B."/>
            <person name="Li T."/>
            <person name="Liu L."/>
            <person name="Cheng Y."/>
            <person name="Zhang L."/>
            <person name="Xu T."/>
            <person name="Zheng H."/>
            <person name="Pu S."/>
            <person name="Wang B."/>
            <person name="Gu W."/>
            <person name="Zhang X.L."/>
            <person name="Zhu G.-F."/>
            <person name="Wang S."/>
            <person name="Zhao G.-P."/>
            <person name="Chen H."/>
        </authorList>
    </citation>
    <scope>NUCLEOTIDE SEQUENCE [LARGE SCALE GENOMIC DNA]</scope>
    <source>
        <strain>JL03</strain>
    </source>
</reference>
<evidence type="ECO:0000255" key="1">
    <source>
        <dbReference type="HAMAP-Rule" id="MF_00508"/>
    </source>
</evidence>
<evidence type="ECO:0000305" key="2"/>
<proteinExistence type="inferred from homology"/>
<protein>
    <recommendedName>
        <fullName evidence="1">Small ribosomal subunit protein uS10</fullName>
    </recommendedName>
    <alternativeName>
        <fullName evidence="2">30S ribosomal protein S10</fullName>
    </alternativeName>
</protein>
<sequence length="103" mass="11767">MQNQRIRIRLKAFDHRLIDQSTAEIVETAKRTGAQVRGPIPLPTRKERFTVLISPHVNKDARDQYEIRTHKRLVDIVEPTEKTVDALMRLDLAAGVDVQISLG</sequence>
<accession>B0BST0</accession>
<organism>
    <name type="scientific">Actinobacillus pleuropneumoniae serotype 3 (strain JL03)</name>
    <dbReference type="NCBI Taxonomy" id="434271"/>
    <lineage>
        <taxon>Bacteria</taxon>
        <taxon>Pseudomonadati</taxon>
        <taxon>Pseudomonadota</taxon>
        <taxon>Gammaproteobacteria</taxon>
        <taxon>Pasteurellales</taxon>
        <taxon>Pasteurellaceae</taxon>
        <taxon>Actinobacillus</taxon>
    </lineage>
</organism>
<dbReference type="EMBL" id="CP000687">
    <property type="protein sequence ID" value="ABY70344.1"/>
    <property type="molecule type" value="Genomic_DNA"/>
</dbReference>
<dbReference type="RefSeq" id="WP_001181005.1">
    <property type="nucleotide sequence ID" value="NC_010278.1"/>
</dbReference>
<dbReference type="SMR" id="B0BST0"/>
<dbReference type="GeneID" id="98390443"/>
<dbReference type="KEGG" id="apj:APJL_1794"/>
<dbReference type="HOGENOM" id="CLU_122625_1_3_6"/>
<dbReference type="Proteomes" id="UP000008547">
    <property type="component" value="Chromosome"/>
</dbReference>
<dbReference type="GO" id="GO:1990904">
    <property type="term" value="C:ribonucleoprotein complex"/>
    <property type="evidence" value="ECO:0007669"/>
    <property type="project" value="UniProtKB-KW"/>
</dbReference>
<dbReference type="GO" id="GO:0005840">
    <property type="term" value="C:ribosome"/>
    <property type="evidence" value="ECO:0007669"/>
    <property type="project" value="UniProtKB-KW"/>
</dbReference>
<dbReference type="GO" id="GO:0003735">
    <property type="term" value="F:structural constituent of ribosome"/>
    <property type="evidence" value="ECO:0007669"/>
    <property type="project" value="InterPro"/>
</dbReference>
<dbReference type="GO" id="GO:0000049">
    <property type="term" value="F:tRNA binding"/>
    <property type="evidence" value="ECO:0007669"/>
    <property type="project" value="UniProtKB-UniRule"/>
</dbReference>
<dbReference type="GO" id="GO:0006412">
    <property type="term" value="P:translation"/>
    <property type="evidence" value="ECO:0007669"/>
    <property type="project" value="UniProtKB-UniRule"/>
</dbReference>
<dbReference type="FunFam" id="3.30.70.600:FF:000001">
    <property type="entry name" value="30S ribosomal protein S10"/>
    <property type="match status" value="1"/>
</dbReference>
<dbReference type="Gene3D" id="3.30.70.600">
    <property type="entry name" value="Ribosomal protein S10 domain"/>
    <property type="match status" value="1"/>
</dbReference>
<dbReference type="HAMAP" id="MF_00508">
    <property type="entry name" value="Ribosomal_uS10"/>
    <property type="match status" value="1"/>
</dbReference>
<dbReference type="InterPro" id="IPR001848">
    <property type="entry name" value="Ribosomal_uS10"/>
</dbReference>
<dbReference type="InterPro" id="IPR018268">
    <property type="entry name" value="Ribosomal_uS10_CS"/>
</dbReference>
<dbReference type="InterPro" id="IPR027486">
    <property type="entry name" value="Ribosomal_uS10_dom"/>
</dbReference>
<dbReference type="InterPro" id="IPR036838">
    <property type="entry name" value="Ribosomal_uS10_dom_sf"/>
</dbReference>
<dbReference type="NCBIfam" id="NF001861">
    <property type="entry name" value="PRK00596.1"/>
    <property type="match status" value="1"/>
</dbReference>
<dbReference type="NCBIfam" id="TIGR01049">
    <property type="entry name" value="rpsJ_bact"/>
    <property type="match status" value="1"/>
</dbReference>
<dbReference type="PANTHER" id="PTHR11700">
    <property type="entry name" value="30S RIBOSOMAL PROTEIN S10 FAMILY MEMBER"/>
    <property type="match status" value="1"/>
</dbReference>
<dbReference type="Pfam" id="PF00338">
    <property type="entry name" value="Ribosomal_S10"/>
    <property type="match status" value="1"/>
</dbReference>
<dbReference type="PRINTS" id="PR00971">
    <property type="entry name" value="RIBOSOMALS10"/>
</dbReference>
<dbReference type="SMART" id="SM01403">
    <property type="entry name" value="Ribosomal_S10"/>
    <property type="match status" value="1"/>
</dbReference>
<dbReference type="SUPFAM" id="SSF54999">
    <property type="entry name" value="Ribosomal protein S10"/>
    <property type="match status" value="1"/>
</dbReference>
<dbReference type="PROSITE" id="PS00361">
    <property type="entry name" value="RIBOSOMAL_S10"/>
    <property type="match status" value="1"/>
</dbReference>
<comment type="function">
    <text evidence="1">Involved in the binding of tRNA to the ribosomes.</text>
</comment>
<comment type="subunit">
    <text evidence="1">Part of the 30S ribosomal subunit.</text>
</comment>
<comment type="similarity">
    <text evidence="1">Belongs to the universal ribosomal protein uS10 family.</text>
</comment>
<keyword id="KW-0687">Ribonucleoprotein</keyword>
<keyword id="KW-0689">Ribosomal protein</keyword>